<keyword id="KW-0414">Isoprene biosynthesis</keyword>
<keyword id="KW-0464">Manganese</keyword>
<keyword id="KW-0479">Metal-binding</keyword>
<keyword id="KW-0521">NADP</keyword>
<keyword id="KW-0560">Oxidoreductase</keyword>
<gene>
    <name evidence="1" type="primary">dxr</name>
    <name type="ordered locus">BURPS1710b_2577</name>
</gene>
<accession>Q3JR34</accession>
<evidence type="ECO:0000255" key="1">
    <source>
        <dbReference type="HAMAP-Rule" id="MF_00183"/>
    </source>
</evidence>
<protein>
    <recommendedName>
        <fullName evidence="1">1-deoxy-D-xylulose 5-phosphate reductoisomerase</fullName>
        <shortName evidence="1">DXP reductoisomerase</shortName>
        <ecNumber evidence="1">1.1.1.267</ecNumber>
    </recommendedName>
    <alternativeName>
        <fullName evidence="1">1-deoxyxylulose-5-phosphate reductoisomerase</fullName>
    </alternativeName>
    <alternativeName>
        <fullName evidence="1">2-C-methyl-D-erythritol 4-phosphate synthase</fullName>
    </alternativeName>
</protein>
<sequence>MQKRLTLLGSTGSIGDSTLDVVARHPERFAVHALTAHRNGEKLVAQCLRFAPDVAVVGDAETAARVEAQLRAAGSRTQVAYGKQALVDVSKSDGCDTVVAAIVGAAGLAPSLAAARAGKRILLANKEALVMSGAIFMDAVRDHGAILLPVDSEHNAIFQCMPRDAAEHGGIAKIIVTASGGPFRTREPATLASVTPDEACKHPNWVMGRKISVDSATMMNKGLEVIEAHWLFGLPSERIDVLIHPQSVIHSLVSYRDGSVLAQLGNPDMRTPIAHALAFPERVDAGVAQLDLAQIATLTFEKPDYARFPCLALAIDALEAGGVASAALNAANEIAVDAFLSRRIRFTAIAQTVGAVLDGLSNRTPGGLDDVIEADAAARRAATAFIGKLPAPGVERAA</sequence>
<name>DXR_BURP1</name>
<reference key="1">
    <citation type="journal article" date="2010" name="Genome Biol. Evol.">
        <title>Continuing evolution of Burkholderia mallei through genome reduction and large-scale rearrangements.</title>
        <authorList>
            <person name="Losada L."/>
            <person name="Ronning C.M."/>
            <person name="DeShazer D."/>
            <person name="Woods D."/>
            <person name="Fedorova N."/>
            <person name="Kim H.S."/>
            <person name="Shabalina S.A."/>
            <person name="Pearson T.R."/>
            <person name="Brinkac L."/>
            <person name="Tan P."/>
            <person name="Nandi T."/>
            <person name="Crabtree J."/>
            <person name="Badger J."/>
            <person name="Beckstrom-Sternberg S."/>
            <person name="Saqib M."/>
            <person name="Schutzer S.E."/>
            <person name="Keim P."/>
            <person name="Nierman W.C."/>
        </authorList>
    </citation>
    <scope>NUCLEOTIDE SEQUENCE [LARGE SCALE GENOMIC DNA]</scope>
    <source>
        <strain>1710b</strain>
    </source>
</reference>
<proteinExistence type="inferred from homology"/>
<organism>
    <name type="scientific">Burkholderia pseudomallei (strain 1710b)</name>
    <dbReference type="NCBI Taxonomy" id="320372"/>
    <lineage>
        <taxon>Bacteria</taxon>
        <taxon>Pseudomonadati</taxon>
        <taxon>Pseudomonadota</taxon>
        <taxon>Betaproteobacteria</taxon>
        <taxon>Burkholderiales</taxon>
        <taxon>Burkholderiaceae</taxon>
        <taxon>Burkholderia</taxon>
        <taxon>pseudomallei group</taxon>
    </lineage>
</organism>
<dbReference type="EC" id="1.1.1.267" evidence="1"/>
<dbReference type="EMBL" id="CP000124">
    <property type="protein sequence ID" value="ABA48721.1"/>
    <property type="molecule type" value="Genomic_DNA"/>
</dbReference>
<dbReference type="RefSeq" id="WP_004527290.1">
    <property type="nucleotide sequence ID" value="NC_007434.1"/>
</dbReference>
<dbReference type="SMR" id="Q3JR34"/>
<dbReference type="EnsemblBacteria" id="ABA48721">
    <property type="protein sequence ID" value="ABA48721"/>
    <property type="gene ID" value="BURPS1710b_2577"/>
</dbReference>
<dbReference type="KEGG" id="bpm:BURPS1710b_2577"/>
<dbReference type="HOGENOM" id="CLU_035714_4_0_4"/>
<dbReference type="UniPathway" id="UPA00056">
    <property type="reaction ID" value="UER00092"/>
</dbReference>
<dbReference type="Proteomes" id="UP000002700">
    <property type="component" value="Chromosome I"/>
</dbReference>
<dbReference type="GO" id="GO:0030604">
    <property type="term" value="F:1-deoxy-D-xylulose-5-phosphate reductoisomerase activity"/>
    <property type="evidence" value="ECO:0007669"/>
    <property type="project" value="UniProtKB-UniRule"/>
</dbReference>
<dbReference type="GO" id="GO:0030145">
    <property type="term" value="F:manganese ion binding"/>
    <property type="evidence" value="ECO:0007669"/>
    <property type="project" value="TreeGrafter"/>
</dbReference>
<dbReference type="GO" id="GO:0070402">
    <property type="term" value="F:NADPH binding"/>
    <property type="evidence" value="ECO:0007669"/>
    <property type="project" value="InterPro"/>
</dbReference>
<dbReference type="GO" id="GO:0051484">
    <property type="term" value="P:isopentenyl diphosphate biosynthetic process, methylerythritol 4-phosphate pathway involved in terpenoid biosynthetic process"/>
    <property type="evidence" value="ECO:0007669"/>
    <property type="project" value="TreeGrafter"/>
</dbReference>
<dbReference type="FunFam" id="1.10.1740.10:FF:000004">
    <property type="entry name" value="1-deoxy-D-xylulose 5-phosphate reductoisomerase"/>
    <property type="match status" value="1"/>
</dbReference>
<dbReference type="FunFam" id="3.40.50.720:FF:000045">
    <property type="entry name" value="1-deoxy-D-xylulose 5-phosphate reductoisomerase"/>
    <property type="match status" value="1"/>
</dbReference>
<dbReference type="Gene3D" id="1.10.1740.10">
    <property type="match status" value="1"/>
</dbReference>
<dbReference type="Gene3D" id="3.40.50.720">
    <property type="entry name" value="NAD(P)-binding Rossmann-like Domain"/>
    <property type="match status" value="1"/>
</dbReference>
<dbReference type="HAMAP" id="MF_00183">
    <property type="entry name" value="DXP_reductoisom"/>
    <property type="match status" value="1"/>
</dbReference>
<dbReference type="InterPro" id="IPR003821">
    <property type="entry name" value="DXP_reductoisomerase"/>
</dbReference>
<dbReference type="InterPro" id="IPR013644">
    <property type="entry name" value="DXP_reductoisomerase_C"/>
</dbReference>
<dbReference type="InterPro" id="IPR013512">
    <property type="entry name" value="DXP_reductoisomerase_N"/>
</dbReference>
<dbReference type="InterPro" id="IPR026877">
    <property type="entry name" value="DXPR_C"/>
</dbReference>
<dbReference type="InterPro" id="IPR036169">
    <property type="entry name" value="DXPR_C_sf"/>
</dbReference>
<dbReference type="InterPro" id="IPR036291">
    <property type="entry name" value="NAD(P)-bd_dom_sf"/>
</dbReference>
<dbReference type="NCBIfam" id="TIGR00243">
    <property type="entry name" value="Dxr"/>
    <property type="match status" value="1"/>
</dbReference>
<dbReference type="NCBIfam" id="NF003938">
    <property type="entry name" value="PRK05447.1-1"/>
    <property type="match status" value="1"/>
</dbReference>
<dbReference type="NCBIfam" id="NF009114">
    <property type="entry name" value="PRK12464.1"/>
    <property type="match status" value="1"/>
</dbReference>
<dbReference type="PANTHER" id="PTHR30525">
    <property type="entry name" value="1-DEOXY-D-XYLULOSE 5-PHOSPHATE REDUCTOISOMERASE"/>
    <property type="match status" value="1"/>
</dbReference>
<dbReference type="PANTHER" id="PTHR30525:SF0">
    <property type="entry name" value="1-DEOXY-D-XYLULOSE 5-PHOSPHATE REDUCTOISOMERASE, CHLOROPLASTIC"/>
    <property type="match status" value="1"/>
</dbReference>
<dbReference type="Pfam" id="PF08436">
    <property type="entry name" value="DXP_redisom_C"/>
    <property type="match status" value="1"/>
</dbReference>
<dbReference type="Pfam" id="PF02670">
    <property type="entry name" value="DXP_reductoisom"/>
    <property type="match status" value="1"/>
</dbReference>
<dbReference type="Pfam" id="PF13288">
    <property type="entry name" value="DXPR_C"/>
    <property type="match status" value="1"/>
</dbReference>
<dbReference type="PIRSF" id="PIRSF006205">
    <property type="entry name" value="Dxp_reductismrs"/>
    <property type="match status" value="1"/>
</dbReference>
<dbReference type="SUPFAM" id="SSF69055">
    <property type="entry name" value="1-deoxy-D-xylulose-5-phosphate reductoisomerase, C-terminal domain"/>
    <property type="match status" value="1"/>
</dbReference>
<dbReference type="SUPFAM" id="SSF55347">
    <property type="entry name" value="Glyceraldehyde-3-phosphate dehydrogenase-like, C-terminal domain"/>
    <property type="match status" value="1"/>
</dbReference>
<dbReference type="SUPFAM" id="SSF51735">
    <property type="entry name" value="NAD(P)-binding Rossmann-fold domains"/>
    <property type="match status" value="1"/>
</dbReference>
<comment type="function">
    <text evidence="1">Catalyzes the NADPH-dependent rearrangement and reduction of 1-deoxy-D-xylulose-5-phosphate (DXP) to 2-C-methyl-D-erythritol 4-phosphate (MEP).</text>
</comment>
<comment type="catalytic activity">
    <reaction evidence="1">
        <text>2-C-methyl-D-erythritol 4-phosphate + NADP(+) = 1-deoxy-D-xylulose 5-phosphate + NADPH + H(+)</text>
        <dbReference type="Rhea" id="RHEA:13717"/>
        <dbReference type="ChEBI" id="CHEBI:15378"/>
        <dbReference type="ChEBI" id="CHEBI:57783"/>
        <dbReference type="ChEBI" id="CHEBI:57792"/>
        <dbReference type="ChEBI" id="CHEBI:58262"/>
        <dbReference type="ChEBI" id="CHEBI:58349"/>
        <dbReference type="EC" id="1.1.1.267"/>
    </reaction>
    <physiologicalReaction direction="right-to-left" evidence="1">
        <dbReference type="Rhea" id="RHEA:13719"/>
    </physiologicalReaction>
</comment>
<comment type="cofactor">
    <cofactor evidence="1">
        <name>Mg(2+)</name>
        <dbReference type="ChEBI" id="CHEBI:18420"/>
    </cofactor>
    <cofactor evidence="1">
        <name>Mn(2+)</name>
        <dbReference type="ChEBI" id="CHEBI:29035"/>
    </cofactor>
</comment>
<comment type="pathway">
    <text evidence="1">Isoprenoid biosynthesis; isopentenyl diphosphate biosynthesis via DXP pathway; isopentenyl diphosphate from 1-deoxy-D-xylulose 5-phosphate: step 1/6.</text>
</comment>
<comment type="similarity">
    <text evidence="1">Belongs to the DXR family.</text>
</comment>
<feature type="chain" id="PRO_1000020230" description="1-deoxy-D-xylulose 5-phosphate reductoisomerase">
    <location>
        <begin position="1"/>
        <end position="398"/>
    </location>
</feature>
<feature type="binding site" evidence="1">
    <location>
        <position position="11"/>
    </location>
    <ligand>
        <name>NADPH</name>
        <dbReference type="ChEBI" id="CHEBI:57783"/>
    </ligand>
</feature>
<feature type="binding site" evidence="1">
    <location>
        <position position="12"/>
    </location>
    <ligand>
        <name>NADPH</name>
        <dbReference type="ChEBI" id="CHEBI:57783"/>
    </ligand>
</feature>
<feature type="binding site" evidence="1">
    <location>
        <position position="13"/>
    </location>
    <ligand>
        <name>NADPH</name>
        <dbReference type="ChEBI" id="CHEBI:57783"/>
    </ligand>
</feature>
<feature type="binding site" evidence="1">
    <location>
        <position position="14"/>
    </location>
    <ligand>
        <name>NADPH</name>
        <dbReference type="ChEBI" id="CHEBI:57783"/>
    </ligand>
</feature>
<feature type="binding site" evidence="1">
    <location>
        <position position="38"/>
    </location>
    <ligand>
        <name>NADPH</name>
        <dbReference type="ChEBI" id="CHEBI:57783"/>
    </ligand>
</feature>
<feature type="binding site" evidence="1">
    <location>
        <position position="39"/>
    </location>
    <ligand>
        <name>NADPH</name>
        <dbReference type="ChEBI" id="CHEBI:57783"/>
    </ligand>
</feature>
<feature type="binding site" evidence="1">
    <location>
        <position position="125"/>
    </location>
    <ligand>
        <name>NADPH</name>
        <dbReference type="ChEBI" id="CHEBI:57783"/>
    </ligand>
</feature>
<feature type="binding site" evidence="1">
    <location>
        <position position="126"/>
    </location>
    <ligand>
        <name>1-deoxy-D-xylulose 5-phosphate</name>
        <dbReference type="ChEBI" id="CHEBI:57792"/>
    </ligand>
</feature>
<feature type="binding site" evidence="1">
    <location>
        <position position="127"/>
    </location>
    <ligand>
        <name>NADPH</name>
        <dbReference type="ChEBI" id="CHEBI:57783"/>
    </ligand>
</feature>
<feature type="binding site" evidence="1">
    <location>
        <position position="151"/>
    </location>
    <ligand>
        <name>Mn(2+)</name>
        <dbReference type="ChEBI" id="CHEBI:29035"/>
    </ligand>
</feature>
<feature type="binding site" evidence="1">
    <location>
        <position position="152"/>
    </location>
    <ligand>
        <name>1-deoxy-D-xylulose 5-phosphate</name>
        <dbReference type="ChEBI" id="CHEBI:57792"/>
    </ligand>
</feature>
<feature type="binding site" evidence="1">
    <location>
        <position position="153"/>
    </location>
    <ligand>
        <name>1-deoxy-D-xylulose 5-phosphate</name>
        <dbReference type="ChEBI" id="CHEBI:57792"/>
    </ligand>
</feature>
<feature type="binding site" evidence="1">
    <location>
        <position position="153"/>
    </location>
    <ligand>
        <name>Mn(2+)</name>
        <dbReference type="ChEBI" id="CHEBI:29035"/>
    </ligand>
</feature>
<feature type="binding site" evidence="1">
    <location>
        <position position="179"/>
    </location>
    <ligand>
        <name>1-deoxy-D-xylulose 5-phosphate</name>
        <dbReference type="ChEBI" id="CHEBI:57792"/>
    </ligand>
</feature>
<feature type="binding site" evidence="1">
    <location>
        <position position="202"/>
    </location>
    <ligand>
        <name>1-deoxy-D-xylulose 5-phosphate</name>
        <dbReference type="ChEBI" id="CHEBI:57792"/>
    </ligand>
</feature>
<feature type="binding site" evidence="1">
    <location>
        <position position="208"/>
    </location>
    <ligand>
        <name>NADPH</name>
        <dbReference type="ChEBI" id="CHEBI:57783"/>
    </ligand>
</feature>
<feature type="binding site" evidence="1">
    <location>
        <position position="215"/>
    </location>
    <ligand>
        <name>1-deoxy-D-xylulose 5-phosphate</name>
        <dbReference type="ChEBI" id="CHEBI:57792"/>
    </ligand>
</feature>
<feature type="binding site" evidence="1">
    <location>
        <position position="220"/>
    </location>
    <ligand>
        <name>1-deoxy-D-xylulose 5-phosphate</name>
        <dbReference type="ChEBI" id="CHEBI:57792"/>
    </ligand>
</feature>
<feature type="binding site" evidence="1">
    <location>
        <position position="221"/>
    </location>
    <ligand>
        <name>1-deoxy-D-xylulose 5-phosphate</name>
        <dbReference type="ChEBI" id="CHEBI:57792"/>
    </ligand>
</feature>
<feature type="binding site" evidence="1">
    <location>
        <position position="224"/>
    </location>
    <ligand>
        <name>1-deoxy-D-xylulose 5-phosphate</name>
        <dbReference type="ChEBI" id="CHEBI:57792"/>
    </ligand>
</feature>
<feature type="binding site" evidence="1">
    <location>
        <position position="224"/>
    </location>
    <ligand>
        <name>Mn(2+)</name>
        <dbReference type="ChEBI" id="CHEBI:29035"/>
    </ligand>
</feature>